<dbReference type="EMBL" id="L22858">
    <property type="protein sequence ID" value="AAA66649.1"/>
    <property type="molecule type" value="Genomic_DNA"/>
</dbReference>
<dbReference type="EMBL" id="M96361">
    <property type="protein sequence ID" value="AAA66789.1"/>
    <property type="molecule type" value="Genomic_DNA"/>
</dbReference>
<dbReference type="PIR" id="C72852">
    <property type="entry name" value="C72852"/>
</dbReference>
<dbReference type="PIR" id="D44221">
    <property type="entry name" value="D44221"/>
</dbReference>
<dbReference type="RefSeq" id="NP_054048.1">
    <property type="nucleotide sequence ID" value="NC_001623.1"/>
</dbReference>
<dbReference type="GeneID" id="1403851"/>
<dbReference type="KEGG" id="vg:1403851"/>
<dbReference type="OrthoDB" id="17008at10239"/>
<dbReference type="Proteomes" id="UP000008292">
    <property type="component" value="Segment"/>
</dbReference>
<dbReference type="InterPro" id="IPR009946">
    <property type="entry name" value="AcMNPV_Orf4"/>
</dbReference>
<dbReference type="Pfam" id="PF07346">
    <property type="entry name" value="DUF1477"/>
    <property type="match status" value="1"/>
</dbReference>
<sequence length="108" mass="12162">MNSGDATRLHCSNAHAKQTLATLFANRNHSSFYEYAIAFVSTLLFKNNLNLMTACNLINSLINFELNMFGKSLLLNGFVNFCIANSDGVTIQHKMLTNVLSFLLEKYY</sequence>
<name>Y019_NPVAC</name>
<keyword id="KW-1185">Reference proteome</keyword>
<accession>P41424</accession>
<reference key="1">
    <citation type="journal article" date="1994" name="Virology">
        <title>The complete DNA sequence of Autographa californica nuclear polyhedrosis virus.</title>
        <authorList>
            <person name="Ayres M.D."/>
            <person name="Howard S.C."/>
            <person name="Kuzio J."/>
            <person name="Lopez-Ferber M."/>
            <person name="Possee R.D."/>
        </authorList>
    </citation>
    <scope>NUCLEOTIDE SEQUENCE [LARGE SCALE GENOMIC DNA]</scope>
    <source>
        <strain>C6</strain>
    </source>
</reference>
<reference key="2">
    <citation type="journal article" date="1992" name="Virology">
        <title>Sequence, genomic organization of the EcoRI-A fragment of Autographa californica nuclear polyhedrosis virus, and identification of a viral-encoded protein resembling the outer capsid protein VP8 of rotavirus.</title>
        <authorList>
            <person name="Braunagel S.C."/>
            <person name="Daniel K.D."/>
            <person name="Reilly L.M."/>
            <person name="Guarino L.A."/>
            <person name="Hong T."/>
            <person name="Summers M.D."/>
        </authorList>
    </citation>
    <scope>NUCLEOTIDE SEQUENCE [GENOMIC DNA]</scope>
    <source>
        <strain>E2</strain>
    </source>
</reference>
<feature type="chain" id="PRO_0000132952" description="Uncharacterized 12.2 kDa protein in EGT-IAP1 intergenic region">
    <location>
        <begin position="1"/>
        <end position="108"/>
    </location>
</feature>
<feature type="sequence conflict" description="In Ref. 2; AAA66789." evidence="1" ref="2">
    <original>A</original>
    <variation>R</variation>
    <location>
        <position position="6"/>
    </location>
</feature>
<organism>
    <name type="scientific">Autographa californica nuclear polyhedrosis virus</name>
    <name type="common">AcMNPV</name>
    <dbReference type="NCBI Taxonomy" id="46015"/>
    <lineage>
        <taxon>Viruses</taxon>
        <taxon>Viruses incertae sedis</taxon>
        <taxon>Naldaviricetes</taxon>
        <taxon>Lefavirales</taxon>
        <taxon>Baculoviridae</taxon>
        <taxon>Alphabaculovirus</taxon>
        <taxon>Alphabaculovirus aucalifornicae</taxon>
    </lineage>
</organism>
<organismHost>
    <name type="scientific">Lepidoptera</name>
    <name type="common">butterflies and moths</name>
    <dbReference type="NCBI Taxonomy" id="7088"/>
</organismHost>
<proteinExistence type="predicted"/>
<protein>
    <recommendedName>
        <fullName>Uncharacterized 12.2 kDa protein in EGT-IAP1 intergenic region</fullName>
    </recommendedName>
    <alternativeName>
        <fullName>ORF4</fullName>
    </alternativeName>
</protein>
<evidence type="ECO:0000305" key="1"/>